<dbReference type="EMBL" id="DS027698">
    <property type="protein sequence ID" value="EAW16479.1"/>
    <property type="molecule type" value="Genomic_DNA"/>
</dbReference>
<dbReference type="RefSeq" id="XP_001258376.1">
    <property type="nucleotide sequence ID" value="XM_001258375.1"/>
</dbReference>
<dbReference type="SMR" id="A1DNV8"/>
<dbReference type="STRING" id="331117.A1DNV8"/>
<dbReference type="EnsemblFungi" id="EAW16479">
    <property type="protein sequence ID" value="EAW16479"/>
    <property type="gene ID" value="NFIA_058290"/>
</dbReference>
<dbReference type="GeneID" id="4584892"/>
<dbReference type="KEGG" id="nfi:NFIA_058290"/>
<dbReference type="VEuPathDB" id="FungiDB:NFIA_058290"/>
<dbReference type="eggNOG" id="KOG4328">
    <property type="taxonomic scope" value="Eukaryota"/>
</dbReference>
<dbReference type="HOGENOM" id="CLU_017019_1_1_1"/>
<dbReference type="OMA" id="DPNTLYW"/>
<dbReference type="OrthoDB" id="9890280at2759"/>
<dbReference type="Proteomes" id="UP000006702">
    <property type="component" value="Unassembled WGS sequence"/>
</dbReference>
<dbReference type="GO" id="GO:0000785">
    <property type="term" value="C:chromatin"/>
    <property type="evidence" value="ECO:0007669"/>
    <property type="project" value="EnsemblFungi"/>
</dbReference>
<dbReference type="GO" id="GO:0005737">
    <property type="term" value="C:cytoplasm"/>
    <property type="evidence" value="ECO:0007669"/>
    <property type="project" value="EnsemblFungi"/>
</dbReference>
<dbReference type="GO" id="GO:0034399">
    <property type="term" value="C:nuclear periphery"/>
    <property type="evidence" value="ECO:0007669"/>
    <property type="project" value="EnsemblFungi"/>
</dbReference>
<dbReference type="GO" id="GO:0003677">
    <property type="term" value="F:DNA binding"/>
    <property type="evidence" value="ECO:0007669"/>
    <property type="project" value="UniProtKB-KW"/>
</dbReference>
<dbReference type="GO" id="GO:0006974">
    <property type="term" value="P:DNA damage response"/>
    <property type="evidence" value="ECO:0007669"/>
    <property type="project" value="UniProtKB-KW"/>
</dbReference>
<dbReference type="GO" id="GO:2000001">
    <property type="term" value="P:regulation of DNA damage checkpoint"/>
    <property type="evidence" value="ECO:0007669"/>
    <property type="project" value="EnsemblFungi"/>
</dbReference>
<dbReference type="FunFam" id="2.130.10.10:FF:000562">
    <property type="entry name" value="DNA damage-binding protein CMR1"/>
    <property type="match status" value="1"/>
</dbReference>
<dbReference type="Gene3D" id="2.130.10.10">
    <property type="entry name" value="YVTN repeat-like/Quinoprotein amine dehydrogenase"/>
    <property type="match status" value="1"/>
</dbReference>
<dbReference type="InterPro" id="IPR015943">
    <property type="entry name" value="WD40/YVTN_repeat-like_dom_sf"/>
</dbReference>
<dbReference type="InterPro" id="IPR036322">
    <property type="entry name" value="WD40_repeat_dom_sf"/>
</dbReference>
<dbReference type="InterPro" id="IPR001680">
    <property type="entry name" value="WD40_rpt"/>
</dbReference>
<dbReference type="InterPro" id="IPR050853">
    <property type="entry name" value="WD_repeat_DNA-damage-binding"/>
</dbReference>
<dbReference type="PANTHER" id="PTHR14773">
    <property type="entry name" value="WD REPEAT-CONTAINING PROTEIN 76"/>
    <property type="match status" value="1"/>
</dbReference>
<dbReference type="PANTHER" id="PTHR14773:SF0">
    <property type="entry name" value="WD REPEAT-CONTAINING PROTEIN 76"/>
    <property type="match status" value="1"/>
</dbReference>
<dbReference type="Pfam" id="PF00400">
    <property type="entry name" value="WD40"/>
    <property type="match status" value="3"/>
</dbReference>
<dbReference type="SMART" id="SM00320">
    <property type="entry name" value="WD40"/>
    <property type="match status" value="4"/>
</dbReference>
<dbReference type="SUPFAM" id="SSF50978">
    <property type="entry name" value="WD40 repeat-like"/>
    <property type="match status" value="1"/>
</dbReference>
<dbReference type="PROSITE" id="PS50082">
    <property type="entry name" value="WD_REPEATS_2"/>
    <property type="match status" value="1"/>
</dbReference>
<dbReference type="PROSITE" id="PS50294">
    <property type="entry name" value="WD_REPEATS_REGION"/>
    <property type="match status" value="1"/>
</dbReference>
<evidence type="ECO:0000250" key="1">
    <source>
        <dbReference type="UniProtKB" id="Q12510"/>
    </source>
</evidence>
<evidence type="ECO:0000255" key="2"/>
<evidence type="ECO:0000256" key="3">
    <source>
        <dbReference type="SAM" id="MobiDB-lite"/>
    </source>
</evidence>
<evidence type="ECO:0000305" key="4"/>
<feature type="chain" id="PRO_0000351110" description="DNA damage-binding protein cmr1">
    <location>
        <begin position="1"/>
        <end position="527"/>
    </location>
</feature>
<feature type="repeat" description="WD 1" evidence="2">
    <location>
        <begin position="185"/>
        <end position="226"/>
    </location>
</feature>
<feature type="repeat" description="WD 2" evidence="2">
    <location>
        <begin position="249"/>
        <end position="289"/>
    </location>
</feature>
<feature type="repeat" description="WD 3" evidence="2">
    <location>
        <begin position="296"/>
        <end position="336"/>
    </location>
</feature>
<feature type="repeat" description="WD 4" evidence="2">
    <location>
        <begin position="341"/>
        <end position="381"/>
    </location>
</feature>
<feature type="repeat" description="WD 5" evidence="2">
    <location>
        <begin position="388"/>
        <end position="427"/>
    </location>
</feature>
<feature type="repeat" description="WD 6" evidence="2">
    <location>
        <begin position="450"/>
        <end position="493"/>
    </location>
</feature>
<feature type="repeat" description="WD 7" evidence="2">
    <location>
        <begin position="496"/>
        <end position="527"/>
    </location>
</feature>
<feature type="region of interest" description="Disordered" evidence="3">
    <location>
        <begin position="35"/>
        <end position="90"/>
    </location>
</feature>
<feature type="region of interest" description="Disordered" evidence="3">
    <location>
        <begin position="284"/>
        <end position="303"/>
    </location>
</feature>
<feature type="compositionally biased region" description="Basic residues" evidence="3">
    <location>
        <begin position="52"/>
        <end position="62"/>
    </location>
</feature>
<organism>
    <name type="scientific">Neosartorya fischeri (strain ATCC 1020 / DSM 3700 / CBS 544.65 / FGSC A1164 / JCM 1740 / NRRL 181 / WB 181)</name>
    <name type="common">Aspergillus fischerianus</name>
    <dbReference type="NCBI Taxonomy" id="331117"/>
    <lineage>
        <taxon>Eukaryota</taxon>
        <taxon>Fungi</taxon>
        <taxon>Dikarya</taxon>
        <taxon>Ascomycota</taxon>
        <taxon>Pezizomycotina</taxon>
        <taxon>Eurotiomycetes</taxon>
        <taxon>Eurotiomycetidae</taxon>
        <taxon>Eurotiales</taxon>
        <taxon>Aspergillaceae</taxon>
        <taxon>Aspergillus</taxon>
        <taxon>Aspergillus subgen. Fumigati</taxon>
    </lineage>
</organism>
<sequence length="527" mass="58395">MGADNELSEFEKQRLANIAERDALLKKLTLDAQSAGLFPPKSARSSPGGLTKPKKKPAPKKVKKEDEDLVPRRMSSRLRGLAADSEVAKRKADEQYEAAQQAERAKRVRKSDAFSFSEMLVSGQKLSGDSLIGVDVVTKGVAMPYQRTFGDDDIKKTTDKELKALREEMSGLRLWEAWEPNRIKLTPERIYTMTFHPSEAKPLIFAGDKMGNLGVLDASQEKPISAVKQEDDEDAEDDDPDPVLTTLKPHTRTISSMHVHPSKPTHLYSASYDSSIRELDLEKTTSVEKYAPESTSDDIPISGIDMAPDDPNTLYWTTLDGAFGRYDTRASRRSAVATWQLSEKKIGGFSLFPTHPHFFATASLDRTMRLWDIRKLSHDEPVPVGEHVSRLSVSHAAFNSAGQIATSSYDDTLKIYDFGSKGIAAWKPGHTLSDAEMKPDTIVRHNCQTGRWVTILRPQWQANPQSPIQRFCIGNMNRFVDVYSSSGDQLAQLGGDGITAVPAVAVFHRSTNWIAGGTASGKICLWM</sequence>
<comment type="function">
    <text evidence="1">DNA-binding protein that binds to both single- and double-stranded DNA. Binds preferentially to UV-damaged DNA. May be involved in DNA-metabolic processes.</text>
</comment>
<comment type="similarity">
    <text evidence="4">Belongs to the WD repeat DDB2/WDR76 family.</text>
</comment>
<protein>
    <recommendedName>
        <fullName evidence="1">DNA damage-binding protein cmr1</fullName>
    </recommendedName>
</protein>
<name>CMR1_NEOFI</name>
<keyword id="KW-0227">DNA damage</keyword>
<keyword id="KW-0238">DNA-binding</keyword>
<keyword id="KW-1185">Reference proteome</keyword>
<keyword id="KW-0677">Repeat</keyword>
<keyword id="KW-0853">WD repeat</keyword>
<reference key="1">
    <citation type="journal article" date="2008" name="PLoS Genet.">
        <title>Genomic islands in the pathogenic filamentous fungus Aspergillus fumigatus.</title>
        <authorList>
            <person name="Fedorova N.D."/>
            <person name="Khaldi N."/>
            <person name="Joardar V.S."/>
            <person name="Maiti R."/>
            <person name="Amedeo P."/>
            <person name="Anderson M.J."/>
            <person name="Crabtree J."/>
            <person name="Silva J.C."/>
            <person name="Badger J.H."/>
            <person name="Albarraq A."/>
            <person name="Angiuoli S."/>
            <person name="Bussey H."/>
            <person name="Bowyer P."/>
            <person name="Cotty P.J."/>
            <person name="Dyer P.S."/>
            <person name="Egan A."/>
            <person name="Galens K."/>
            <person name="Fraser-Liggett C.M."/>
            <person name="Haas B.J."/>
            <person name="Inman J.M."/>
            <person name="Kent R."/>
            <person name="Lemieux S."/>
            <person name="Malavazi I."/>
            <person name="Orvis J."/>
            <person name="Roemer T."/>
            <person name="Ronning C.M."/>
            <person name="Sundaram J.P."/>
            <person name="Sutton G."/>
            <person name="Turner G."/>
            <person name="Venter J.C."/>
            <person name="White O.R."/>
            <person name="Whitty B.R."/>
            <person name="Youngman P."/>
            <person name="Wolfe K.H."/>
            <person name="Goldman G.H."/>
            <person name="Wortman J.R."/>
            <person name="Jiang B."/>
            <person name="Denning D.W."/>
            <person name="Nierman W.C."/>
        </authorList>
    </citation>
    <scope>NUCLEOTIDE SEQUENCE [LARGE SCALE GENOMIC DNA]</scope>
    <source>
        <strain>ATCC 1020 / DSM 3700 / CBS 544.65 / FGSC A1164 / JCM 1740 / NRRL 181 / WB 181</strain>
    </source>
</reference>
<accession>A1DNV8</accession>
<gene>
    <name type="ORF">NFIA_058290</name>
</gene>
<proteinExistence type="inferred from homology"/>